<reference key="1">
    <citation type="submission" date="2008-02" db="EMBL/GenBank/DDBJ databases">
        <title>Complete sequence of chromosome 1 of Burkholderia cenocepacia MC0-3.</title>
        <authorList>
            <person name="Copeland A."/>
            <person name="Lucas S."/>
            <person name="Lapidus A."/>
            <person name="Barry K."/>
            <person name="Bruce D."/>
            <person name="Goodwin L."/>
            <person name="Glavina del Rio T."/>
            <person name="Dalin E."/>
            <person name="Tice H."/>
            <person name="Pitluck S."/>
            <person name="Chain P."/>
            <person name="Malfatti S."/>
            <person name="Shin M."/>
            <person name="Vergez L."/>
            <person name="Schmutz J."/>
            <person name="Larimer F."/>
            <person name="Land M."/>
            <person name="Hauser L."/>
            <person name="Kyrpides N."/>
            <person name="Mikhailova N."/>
            <person name="Tiedje J."/>
            <person name="Richardson P."/>
        </authorList>
    </citation>
    <scope>NUCLEOTIDE SEQUENCE [LARGE SCALE GENOMIC DNA]</scope>
    <source>
        <strain>MC0-3</strain>
    </source>
</reference>
<name>RL5_BURO0</name>
<comment type="function">
    <text evidence="1">This is one of the proteins that bind and probably mediate the attachment of the 5S RNA into the large ribosomal subunit, where it forms part of the central protuberance. In the 70S ribosome it contacts protein S13 of the 30S subunit (bridge B1b), connecting the 2 subunits; this bridge is implicated in subunit movement. Contacts the P site tRNA; the 5S rRNA and some of its associated proteins might help stabilize positioning of ribosome-bound tRNAs.</text>
</comment>
<comment type="subunit">
    <text evidence="1">Part of the 50S ribosomal subunit; part of the 5S rRNA/L5/L18/L25 subcomplex. Contacts the 5S rRNA and the P site tRNA. Forms a bridge to the 30S subunit in the 70S ribosome.</text>
</comment>
<comment type="similarity">
    <text evidence="1">Belongs to the universal ribosomal protein uL5 family.</text>
</comment>
<dbReference type="EMBL" id="CP000958">
    <property type="protein sequence ID" value="ACA89519.1"/>
    <property type="molecule type" value="Genomic_DNA"/>
</dbReference>
<dbReference type="RefSeq" id="WP_006477186.1">
    <property type="nucleotide sequence ID" value="NC_010508.1"/>
</dbReference>
<dbReference type="SMR" id="B1JU34"/>
<dbReference type="GeneID" id="93193439"/>
<dbReference type="KEGG" id="bcm:Bcenmc03_0339"/>
<dbReference type="HOGENOM" id="CLU_061015_2_1_4"/>
<dbReference type="Proteomes" id="UP000002169">
    <property type="component" value="Chromosome 1"/>
</dbReference>
<dbReference type="GO" id="GO:1990904">
    <property type="term" value="C:ribonucleoprotein complex"/>
    <property type="evidence" value="ECO:0007669"/>
    <property type="project" value="UniProtKB-KW"/>
</dbReference>
<dbReference type="GO" id="GO:0005840">
    <property type="term" value="C:ribosome"/>
    <property type="evidence" value="ECO:0007669"/>
    <property type="project" value="UniProtKB-KW"/>
</dbReference>
<dbReference type="GO" id="GO:0019843">
    <property type="term" value="F:rRNA binding"/>
    <property type="evidence" value="ECO:0007669"/>
    <property type="project" value="UniProtKB-UniRule"/>
</dbReference>
<dbReference type="GO" id="GO:0003735">
    <property type="term" value="F:structural constituent of ribosome"/>
    <property type="evidence" value="ECO:0007669"/>
    <property type="project" value="InterPro"/>
</dbReference>
<dbReference type="GO" id="GO:0000049">
    <property type="term" value="F:tRNA binding"/>
    <property type="evidence" value="ECO:0007669"/>
    <property type="project" value="UniProtKB-UniRule"/>
</dbReference>
<dbReference type="GO" id="GO:0006412">
    <property type="term" value="P:translation"/>
    <property type="evidence" value="ECO:0007669"/>
    <property type="project" value="UniProtKB-UniRule"/>
</dbReference>
<dbReference type="FunFam" id="3.30.1440.10:FF:000001">
    <property type="entry name" value="50S ribosomal protein L5"/>
    <property type="match status" value="1"/>
</dbReference>
<dbReference type="Gene3D" id="3.30.1440.10">
    <property type="match status" value="1"/>
</dbReference>
<dbReference type="HAMAP" id="MF_01333_B">
    <property type="entry name" value="Ribosomal_uL5_B"/>
    <property type="match status" value="1"/>
</dbReference>
<dbReference type="InterPro" id="IPR002132">
    <property type="entry name" value="Ribosomal_uL5"/>
</dbReference>
<dbReference type="InterPro" id="IPR020930">
    <property type="entry name" value="Ribosomal_uL5_bac-type"/>
</dbReference>
<dbReference type="InterPro" id="IPR031309">
    <property type="entry name" value="Ribosomal_uL5_C"/>
</dbReference>
<dbReference type="InterPro" id="IPR020929">
    <property type="entry name" value="Ribosomal_uL5_CS"/>
</dbReference>
<dbReference type="InterPro" id="IPR022803">
    <property type="entry name" value="Ribosomal_uL5_dom_sf"/>
</dbReference>
<dbReference type="InterPro" id="IPR031310">
    <property type="entry name" value="Ribosomal_uL5_N"/>
</dbReference>
<dbReference type="NCBIfam" id="NF000585">
    <property type="entry name" value="PRK00010.1"/>
    <property type="match status" value="1"/>
</dbReference>
<dbReference type="PANTHER" id="PTHR11994">
    <property type="entry name" value="60S RIBOSOMAL PROTEIN L11-RELATED"/>
    <property type="match status" value="1"/>
</dbReference>
<dbReference type="Pfam" id="PF00281">
    <property type="entry name" value="Ribosomal_L5"/>
    <property type="match status" value="1"/>
</dbReference>
<dbReference type="Pfam" id="PF00673">
    <property type="entry name" value="Ribosomal_L5_C"/>
    <property type="match status" value="1"/>
</dbReference>
<dbReference type="PIRSF" id="PIRSF002161">
    <property type="entry name" value="Ribosomal_L5"/>
    <property type="match status" value="1"/>
</dbReference>
<dbReference type="SUPFAM" id="SSF55282">
    <property type="entry name" value="RL5-like"/>
    <property type="match status" value="1"/>
</dbReference>
<dbReference type="PROSITE" id="PS00358">
    <property type="entry name" value="RIBOSOMAL_L5"/>
    <property type="match status" value="1"/>
</dbReference>
<evidence type="ECO:0000255" key="1">
    <source>
        <dbReference type="HAMAP-Rule" id="MF_01333"/>
    </source>
</evidence>
<evidence type="ECO:0000305" key="2"/>
<sequence length="179" mass="20013">MARFQEFYKEKVVPGLIEKFGYKSVMEVPRITKITLNMGLGEAIADKKIIENAVGDLTKIAGQKPVVTKARKAIAGFKIRQGYPIGAMVTLRGQAMYEFLDRFVTVALPRVRDFRGVSGRAFDGRGNYNIGVKEQIIFPEIDYDKIDALRGLNISITTTAKTDDEAKALLASFKFPFRN</sequence>
<keyword id="KW-0687">Ribonucleoprotein</keyword>
<keyword id="KW-0689">Ribosomal protein</keyword>
<keyword id="KW-0694">RNA-binding</keyword>
<keyword id="KW-0699">rRNA-binding</keyword>
<keyword id="KW-0820">tRNA-binding</keyword>
<accession>B1JU34</accession>
<feature type="chain" id="PRO_1000142364" description="Large ribosomal subunit protein uL5">
    <location>
        <begin position="1"/>
        <end position="179"/>
    </location>
</feature>
<gene>
    <name evidence="1" type="primary">rplE</name>
    <name type="ordered locus">Bcenmc03_0339</name>
</gene>
<organism>
    <name type="scientific">Burkholderia orbicola (strain MC0-3)</name>
    <dbReference type="NCBI Taxonomy" id="406425"/>
    <lineage>
        <taxon>Bacteria</taxon>
        <taxon>Pseudomonadati</taxon>
        <taxon>Pseudomonadota</taxon>
        <taxon>Betaproteobacteria</taxon>
        <taxon>Burkholderiales</taxon>
        <taxon>Burkholderiaceae</taxon>
        <taxon>Burkholderia</taxon>
        <taxon>Burkholderia cepacia complex</taxon>
        <taxon>Burkholderia orbicola</taxon>
    </lineage>
</organism>
<protein>
    <recommendedName>
        <fullName evidence="1">Large ribosomal subunit protein uL5</fullName>
    </recommendedName>
    <alternativeName>
        <fullName evidence="2">50S ribosomal protein L5</fullName>
    </alternativeName>
</protein>
<proteinExistence type="inferred from homology"/>